<sequence length="563" mass="60636">MTVQEFDVVVVGSGAAGMVAALVAAHRGLSTVVVEKAPHYGGSTARSGGGVWIPNNEVLKRRGVRDTPEAARTYLHGIVGEIVEPERIDAYLDRGPEMLSFVLKHTPLKMCWVPGYSDYYPEAPGGRPGGRSIEPKPFNARKLGADMAGLEPAYGKVPLNVVVMQQDYVRLNQLKRHPRGVLRSMKVGARTMWAKATGKNLVGMGRALIGPLRIGLQRAGVPVELNTAFTDLFVENGVVSGVYVRDSHEAESAEPQLIRARRGVILACGGFEHNEQMRIKYQRAPITTEWTVGASANTGDGILAAEKLGAALDLMDDAWWGPTVPLVGKPWFALSERNSPGSIIVNMSGKRFMNESMPYVEACHHMYGGEHGQGPGPGENIPAWLVFDQRYRDRYIFAGLQPGQRIPSRWLDSGVIVQADTLAELAGKAGLPADELTATVQRFNAFARSGVDEDYHRGESAYDRYYGDPSNKPNPNLGEVGHPPYYGAKMVPGDLGTKGGIRTDVNGRALRDDGSIIDGLYAAGNVSAPVMGHTYPGPGGTIGPAMTFGYLAALHIADQAGKR</sequence>
<proteinExistence type="evidence at protein level"/>
<keyword id="KW-0274">FAD</keyword>
<keyword id="KW-0285">Flavoprotein</keyword>
<keyword id="KW-0442">Lipid degradation</keyword>
<keyword id="KW-0443">Lipid metabolism</keyword>
<keyword id="KW-0560">Oxidoreductase</keyword>
<keyword id="KW-1185">Reference proteome</keyword>
<keyword id="KW-0753">Steroid metabolism</keyword>
<keyword id="KW-0843">Virulence</keyword>
<reference key="1">
    <citation type="journal article" date="1998" name="Nature">
        <title>Deciphering the biology of Mycobacterium tuberculosis from the complete genome sequence.</title>
        <authorList>
            <person name="Cole S.T."/>
            <person name="Brosch R."/>
            <person name="Parkhill J."/>
            <person name="Garnier T."/>
            <person name="Churcher C.M."/>
            <person name="Harris D.E."/>
            <person name="Gordon S.V."/>
            <person name="Eiglmeier K."/>
            <person name="Gas S."/>
            <person name="Barry C.E. III"/>
            <person name="Tekaia F."/>
            <person name="Badcock K."/>
            <person name="Basham D."/>
            <person name="Brown D."/>
            <person name="Chillingworth T."/>
            <person name="Connor R."/>
            <person name="Davies R.M."/>
            <person name="Devlin K."/>
            <person name="Feltwell T."/>
            <person name="Gentles S."/>
            <person name="Hamlin N."/>
            <person name="Holroyd S."/>
            <person name="Hornsby T."/>
            <person name="Jagels K."/>
            <person name="Krogh A."/>
            <person name="McLean J."/>
            <person name="Moule S."/>
            <person name="Murphy L.D."/>
            <person name="Oliver S."/>
            <person name="Osborne J."/>
            <person name="Quail M.A."/>
            <person name="Rajandream M.A."/>
            <person name="Rogers J."/>
            <person name="Rutter S."/>
            <person name="Seeger K."/>
            <person name="Skelton S."/>
            <person name="Squares S."/>
            <person name="Squares R."/>
            <person name="Sulston J.E."/>
            <person name="Taylor K."/>
            <person name="Whitehead S."/>
            <person name="Barrell B.G."/>
        </authorList>
    </citation>
    <scope>NUCLEOTIDE SEQUENCE [LARGE SCALE GENOMIC DNA]</scope>
    <source>
        <strain>ATCC 25618 / H37Rv</strain>
    </source>
</reference>
<reference key="2">
    <citation type="journal article" date="2008" name="Biochem. J.">
        <title>3-Keto-5alpha-steroid Delta(1)-dehydrogenase from Rhodococcus erythropolis SQ1 and its orthologue in Mycobacterium tuberculosis H37Rv are highly specific enzymes that function in cholesterol catabolism.</title>
        <authorList>
            <person name="Knol J."/>
            <person name="Bodewits K."/>
            <person name="Hessels G.I."/>
            <person name="Dijkhuizen L."/>
            <person name="van der Geize R."/>
        </authorList>
    </citation>
    <scope>FUNCTION AS A KETOSTEROID DEHYDROGENASE</scope>
    <scope>CATALYTIC ACTIVITY</scope>
    <scope>BIOPHYSICOCHEMICAL PROPERTIES</scope>
</reference>
<reference key="3">
    <citation type="journal article" date="2011" name="Mol. Cell. Proteomics">
        <title>Proteogenomic analysis of Mycobacterium tuberculosis by high resolution mass spectrometry.</title>
        <authorList>
            <person name="Kelkar D.S."/>
            <person name="Kumar D."/>
            <person name="Kumar P."/>
            <person name="Balakrishnan L."/>
            <person name="Muthusamy B."/>
            <person name="Yadav A.K."/>
            <person name="Shrivastava P."/>
            <person name="Marimuthu A."/>
            <person name="Anand S."/>
            <person name="Sundaram H."/>
            <person name="Kingsbury R."/>
            <person name="Harsha H.C."/>
            <person name="Nair B."/>
            <person name="Prasad T.S."/>
            <person name="Chauhan D.S."/>
            <person name="Katoch K."/>
            <person name="Katoch V.M."/>
            <person name="Kumar P."/>
            <person name="Chaerkady R."/>
            <person name="Ramachandran S."/>
            <person name="Dash D."/>
            <person name="Pandey A."/>
        </authorList>
    </citation>
    <scope>IDENTIFICATION BY MASS SPECTROMETRY [LARGE SCALE ANALYSIS]</scope>
    <source>
        <strain>ATCC 25618 / H37Rv</strain>
    </source>
</reference>
<reference key="4">
    <citation type="journal article" date="2011" name="J. Biol. Chem.">
        <title>Activity of 3-ketosteroid 9alpha-hydroxylase (KshAB) indicates cholesterol side chain and ring degradation occur simultaneously in Mycobacterium tuberculosis.</title>
        <authorList>
            <person name="Capyk J.K."/>
            <person name="Casabon I."/>
            <person name="Gruninger R."/>
            <person name="Strynadka N.C."/>
            <person name="Eltis L.D."/>
        </authorList>
    </citation>
    <scope>FUNCTION</scope>
    <scope>CATALYTIC ACTIVITY</scope>
</reference>
<reference key="5">
    <citation type="journal article" date="2013" name="BMC Microbiol.">
        <title>The role of 3-ketosteroid 1(2)-dehydrogenase in the pathogenicity of Mycobacterium tuberculosis.</title>
        <authorList>
            <person name="Brzezinska M."/>
            <person name="Szulc I."/>
            <person name="Brzostek A."/>
            <person name="Klink M."/>
            <person name="Kielbik M."/>
            <person name="Sulowska Z."/>
            <person name="Pawelczyk J."/>
            <person name="Dziadek J."/>
        </authorList>
    </citation>
    <scope>DISRUPTION PHENOTYPE</scope>
</reference>
<feature type="chain" id="PRO_0000403952" description="3-oxosteroid 1-dehydrogenase">
    <location>
        <begin position="1"/>
        <end position="563"/>
    </location>
</feature>
<feature type="binding site" evidence="1">
    <location>
        <begin position="7"/>
        <end position="36"/>
    </location>
    <ligand>
        <name>FAD</name>
        <dbReference type="ChEBI" id="CHEBI:57692"/>
    </ligand>
</feature>
<protein>
    <recommendedName>
        <fullName>3-oxosteroid 1-dehydrogenase</fullName>
        <ecNumber evidence="2">1.3.99.4</ecNumber>
    </recommendedName>
    <alternativeName>
        <fullName>3-keto-Delta(4)-steroid Delta(1)-dehydrogenase</fullName>
        <shortName>KSDD</shortName>
    </alternativeName>
    <alternativeName>
        <fullName>3-oxo-Delta(4)-steroid 1-dehydrogenase</fullName>
        <shortName>KSTD</shortName>
    </alternativeName>
</protein>
<organism>
    <name type="scientific">Mycobacterium tuberculosis (strain ATCC 25618 / H37Rv)</name>
    <dbReference type="NCBI Taxonomy" id="83332"/>
    <lineage>
        <taxon>Bacteria</taxon>
        <taxon>Bacillati</taxon>
        <taxon>Actinomycetota</taxon>
        <taxon>Actinomycetes</taxon>
        <taxon>Mycobacteriales</taxon>
        <taxon>Mycobacteriaceae</taxon>
        <taxon>Mycobacterium</taxon>
        <taxon>Mycobacterium tuberculosis complex</taxon>
    </lineage>
</organism>
<evidence type="ECO:0000250" key="1"/>
<evidence type="ECO:0000269" key="2">
    <source>
    </source>
</evidence>
<evidence type="ECO:0000269" key="3">
    <source>
    </source>
</evidence>
<evidence type="ECO:0000269" key="4">
    <source>
    </source>
</evidence>
<evidence type="ECO:0000305" key="5"/>
<name>3O1D_MYCTU</name>
<comment type="function">
    <text evidence="2 3">Involved in the degradation of cholesterol (PubMed:18031290, PubMed:21987574). Catalyzes the elimination of the C-1 and C-2 hydrogen atoms of the A-ring from the polycyclic ring structure of 3-ketosteroids (PubMed:18031290). Has a clear preference for 3-ketosteroids with a saturated A-ring, displaying highest activity on 5alpha-AD (5alpha-androstane-3,17-dione) and 5alpha-T (5alpha-testosterone, also known as 17beta-hydroxy-5alpha-androstane-3-one) (PubMed:18031290). Is also involved in the formation of 3-keto-1,4-diene-steroid from 3-keto-4-ene-steroid (PubMed:21987574). Catalyzes the conversion of 3-oxo-23,24-bisnorchol-4-en-22-oyl-coenzyme A thioester (4-BNC-CoA) to 3-oxo-23,24-bisnorchola-1,4-dien-22-oyl-coenzyme A thioester (1,4-BNC-CoA) (PubMed:21987574).</text>
</comment>
<comment type="catalytic activity">
    <reaction evidence="2">
        <text>a 3-oxosteroid + A = a 3-oxo-Delta(1)-steroid + AH2</text>
        <dbReference type="Rhea" id="RHEA:13329"/>
        <dbReference type="ChEBI" id="CHEBI:13193"/>
        <dbReference type="ChEBI" id="CHEBI:17499"/>
        <dbReference type="ChEBI" id="CHEBI:20156"/>
        <dbReference type="ChEBI" id="CHEBI:47788"/>
        <dbReference type="EC" id="1.3.99.4"/>
    </reaction>
</comment>
<comment type="catalytic activity">
    <reaction evidence="3">
        <text>a 3-oxo-Delta(4)-steroid + A = a 3-oxo-Delta(1,4)-steroid + AH2</text>
        <dbReference type="Rhea" id="RHEA:53132"/>
        <dbReference type="ChEBI" id="CHEBI:13193"/>
        <dbReference type="ChEBI" id="CHEBI:17499"/>
        <dbReference type="ChEBI" id="CHEBI:47909"/>
        <dbReference type="ChEBI" id="CHEBI:77166"/>
    </reaction>
</comment>
<comment type="catalytic activity">
    <reaction evidence="3">
        <text>3-oxochol-4-en-22-oyl-CoA + NAD(+) = 3-oxochola-1,4-dien-22-oyl-CoA + NADH + H(+)</text>
        <dbReference type="Rhea" id="RHEA:43884"/>
        <dbReference type="ChEBI" id="CHEBI:15378"/>
        <dbReference type="ChEBI" id="CHEBI:57540"/>
        <dbReference type="ChEBI" id="CHEBI:57945"/>
        <dbReference type="ChEBI" id="CHEBI:83792"/>
        <dbReference type="ChEBI" id="CHEBI:83793"/>
    </reaction>
</comment>
<comment type="cofactor">
    <cofactor evidence="1">
        <name>FAD</name>
        <dbReference type="ChEBI" id="CHEBI:57692"/>
    </cofactor>
</comment>
<comment type="biophysicochemical properties">
    <kinetics>
        <KM evidence="2">33 uM for 5alpha-testosterone (5alpha-T)(at pH 7.4 and 30 degrees Celsius)</KM>
        <KM evidence="2">65 uM for progesterone (at pH 7.4 and 30 degrees Celsius)</KM>
        <KM evidence="2">166 uM for 5alpha-androstane-3,17-dione (5alpha-AD)(at pH 7.4 and 30 degrees Celsius)</KM>
    </kinetics>
</comment>
<comment type="disruption phenotype">
    <text evidence="4">Deletion mutant is unable to use cholesterol as a source of carbon and energy, and has a limited ability to multiply in resting human macrophages following infection, reflecting a failure of the mutant to inhibit the TLR2-dependent bactericidal activity of resting macrophages.</text>
</comment>
<comment type="similarity">
    <text evidence="5">Belongs to the FAD-dependent oxidoreductase 2 family. 3-oxosteroid dehydrogenase subfamily.</text>
</comment>
<dbReference type="EC" id="1.3.99.4" evidence="2"/>
<dbReference type="EMBL" id="AL123456">
    <property type="protein sequence ID" value="CCP46359.1"/>
    <property type="molecule type" value="Genomic_DNA"/>
</dbReference>
<dbReference type="PIR" id="B70676">
    <property type="entry name" value="B70676"/>
</dbReference>
<dbReference type="RefSeq" id="NP_218054.1">
    <property type="nucleotide sequence ID" value="NC_000962.3"/>
</dbReference>
<dbReference type="RefSeq" id="WP_003419253.1">
    <property type="nucleotide sequence ID" value="NZ_NVQJ01000014.1"/>
</dbReference>
<dbReference type="SMR" id="P71864"/>
<dbReference type="FunCoup" id="P71864">
    <property type="interactions" value="12"/>
</dbReference>
<dbReference type="STRING" id="83332.Rv3537"/>
<dbReference type="SwissLipids" id="SLP:000001004"/>
<dbReference type="PaxDb" id="83332-Rv3537"/>
<dbReference type="DNASU" id="888422"/>
<dbReference type="GeneID" id="888422"/>
<dbReference type="KEGG" id="mtu:Rv3537"/>
<dbReference type="KEGG" id="mtv:RVBD_3537"/>
<dbReference type="TubercuList" id="Rv3537"/>
<dbReference type="eggNOG" id="COG1053">
    <property type="taxonomic scope" value="Bacteria"/>
</dbReference>
<dbReference type="InParanoid" id="P71864"/>
<dbReference type="OrthoDB" id="9813348at2"/>
<dbReference type="PhylomeDB" id="P71864"/>
<dbReference type="BioCyc" id="MetaCyc:G185E-7814-MONOMER"/>
<dbReference type="SABIO-RK" id="P71864"/>
<dbReference type="Proteomes" id="UP000001584">
    <property type="component" value="Chromosome"/>
</dbReference>
<dbReference type="GO" id="GO:0005737">
    <property type="term" value="C:cytoplasm"/>
    <property type="evidence" value="ECO:0000318"/>
    <property type="project" value="GO_Central"/>
</dbReference>
<dbReference type="GO" id="GO:0005886">
    <property type="term" value="C:plasma membrane"/>
    <property type="evidence" value="ECO:0007005"/>
    <property type="project" value="MTBBASE"/>
</dbReference>
<dbReference type="GO" id="GO:0047571">
    <property type="term" value="F:3-oxosteroid 1-dehydrogenase activity"/>
    <property type="evidence" value="ECO:0000314"/>
    <property type="project" value="MTBBASE"/>
</dbReference>
<dbReference type="GO" id="GO:0006707">
    <property type="term" value="P:cholesterol catabolic process"/>
    <property type="evidence" value="ECO:0000314"/>
    <property type="project" value="MTBBASE"/>
</dbReference>
<dbReference type="GO" id="GO:0006694">
    <property type="term" value="P:steroid biosynthetic process"/>
    <property type="evidence" value="ECO:0000314"/>
    <property type="project" value="UniProtKB"/>
</dbReference>
<dbReference type="FunFam" id="3.50.50.60:FF:000208">
    <property type="entry name" value="3-ketosteroid dehydrogenase"/>
    <property type="match status" value="1"/>
</dbReference>
<dbReference type="FunFam" id="3.50.50.60:FF:000130">
    <property type="entry name" value="3-oxosteroid 1-dehydrogenase"/>
    <property type="match status" value="1"/>
</dbReference>
<dbReference type="Gene3D" id="3.50.50.60">
    <property type="entry name" value="FAD/NAD(P)-binding domain"/>
    <property type="match status" value="2"/>
</dbReference>
<dbReference type="InterPro" id="IPR003953">
    <property type="entry name" value="FAD-dep_OxRdtase_2_FAD-bd"/>
</dbReference>
<dbReference type="InterPro" id="IPR050315">
    <property type="entry name" value="FAD-oxidoreductase_2"/>
</dbReference>
<dbReference type="InterPro" id="IPR036188">
    <property type="entry name" value="FAD/NAD-bd_sf"/>
</dbReference>
<dbReference type="InterPro" id="IPR027477">
    <property type="entry name" value="Succ_DH/fumarate_Rdtase_cat_sf"/>
</dbReference>
<dbReference type="NCBIfam" id="NF005882">
    <property type="entry name" value="PRK07843.1"/>
    <property type="match status" value="1"/>
</dbReference>
<dbReference type="PANTHER" id="PTHR43400:SF10">
    <property type="entry name" value="3-OXOSTEROID 1-DEHYDROGENASE"/>
    <property type="match status" value="1"/>
</dbReference>
<dbReference type="PANTHER" id="PTHR43400">
    <property type="entry name" value="FUMARATE REDUCTASE"/>
    <property type="match status" value="1"/>
</dbReference>
<dbReference type="Pfam" id="PF00890">
    <property type="entry name" value="FAD_binding_2"/>
    <property type="match status" value="1"/>
</dbReference>
<dbReference type="PRINTS" id="PR00411">
    <property type="entry name" value="PNDRDTASEI"/>
</dbReference>
<dbReference type="SUPFAM" id="SSF51905">
    <property type="entry name" value="FAD/NAD(P)-binding domain"/>
    <property type="match status" value="1"/>
</dbReference>
<dbReference type="SUPFAM" id="SSF56425">
    <property type="entry name" value="Succinate dehydrogenase/fumarate reductase flavoprotein, catalytic domain"/>
    <property type="match status" value="1"/>
</dbReference>
<accession>P71864</accession>
<accession>L0TD13</accession>
<gene>
    <name type="primary">kstD</name>
    <name type="ordered locus">Rv3537</name>
</gene>